<organism>
    <name type="scientific">Influenza A virus (strain A/Malaysia:Malaya/302/1954 H1N1)</name>
    <dbReference type="NCBI Taxonomy" id="425566"/>
    <lineage>
        <taxon>Viruses</taxon>
        <taxon>Riboviria</taxon>
        <taxon>Orthornavirae</taxon>
        <taxon>Negarnaviricota</taxon>
        <taxon>Polyploviricotina</taxon>
        <taxon>Insthoviricetes</taxon>
        <taxon>Articulavirales</taxon>
        <taxon>Orthomyxoviridae</taxon>
        <taxon>Alphainfluenzavirus</taxon>
        <taxon>Alphainfluenzavirus influenzae</taxon>
        <taxon>Influenza A virus</taxon>
    </lineage>
</organism>
<keyword id="KW-0106">Calcium</keyword>
<keyword id="KW-1015">Disulfide bond</keyword>
<keyword id="KW-0325">Glycoprotein</keyword>
<keyword id="KW-0326">Glycosidase</keyword>
<keyword id="KW-1032">Host cell membrane</keyword>
<keyword id="KW-1043">Host membrane</keyword>
<keyword id="KW-0378">Hydrolase</keyword>
<keyword id="KW-0472">Membrane</keyword>
<keyword id="KW-0479">Metal-binding</keyword>
<keyword id="KW-0735">Signal-anchor</keyword>
<keyword id="KW-0812">Transmembrane</keyword>
<keyword id="KW-1133">Transmembrane helix</keyword>
<keyword id="KW-0946">Virion</keyword>
<reference key="1">
    <citation type="submission" date="2007-03" db="EMBL/GenBank/DDBJ databases">
        <title>The NIAID influenza genome sequencing project.</title>
        <authorList>
            <person name="Ghedin E."/>
            <person name="Spiro D."/>
            <person name="Miller N."/>
            <person name="Zaborsky J."/>
            <person name="Feldblyum T."/>
            <person name="Subbu V."/>
            <person name="Shumway M."/>
            <person name="Sparenborg J."/>
            <person name="Groveman L."/>
            <person name="Halpin R."/>
            <person name="Sitz J."/>
            <person name="Koo H."/>
            <person name="Salzberg S.L."/>
            <person name="Webster R.G."/>
            <person name="Hoffmann E."/>
            <person name="Krauss S."/>
            <person name="Naeve C."/>
            <person name="Bao Y."/>
            <person name="Bolotov P."/>
            <person name="Dernovoy D."/>
            <person name="Kiryutin B."/>
            <person name="Lipman D.J."/>
            <person name="Tatusova T."/>
        </authorList>
    </citation>
    <scope>NUCLEOTIDE SEQUENCE [GENOMIC RNA]</scope>
</reference>
<reference key="2">
    <citation type="submission" date="2007-03" db="EMBL/GenBank/DDBJ databases">
        <authorList>
            <consortium name="The NIAID Influenza Genome Sequencing Consortium"/>
        </authorList>
    </citation>
    <scope>NUCLEOTIDE SEQUENCE [GENOMIC RNA]</scope>
</reference>
<evidence type="ECO:0000255" key="1">
    <source>
        <dbReference type="HAMAP-Rule" id="MF_04071"/>
    </source>
</evidence>
<protein>
    <recommendedName>
        <fullName evidence="1">Neuraminidase</fullName>
        <ecNumber evidence="1">3.2.1.18</ecNumber>
    </recommendedName>
</protein>
<feature type="chain" id="PRO_0000372970" description="Neuraminidase">
    <location>
        <begin position="1"/>
        <end position="470"/>
    </location>
</feature>
<feature type="topological domain" description="Intravirion" evidence="1">
    <location>
        <begin position="1"/>
        <end position="6"/>
    </location>
</feature>
<feature type="transmembrane region" description="Helical" evidence="1">
    <location>
        <begin position="7"/>
        <end position="27"/>
    </location>
</feature>
<feature type="topological domain" description="Virion surface" evidence="1">
    <location>
        <begin position="28"/>
        <end position="470"/>
    </location>
</feature>
<feature type="region of interest" description="Involved in apical transport and lipid raft association" evidence="1">
    <location>
        <begin position="11"/>
        <end position="33"/>
    </location>
</feature>
<feature type="region of interest" description="Hypervariable stalk region" evidence="1">
    <location>
        <begin position="36"/>
        <end position="90"/>
    </location>
</feature>
<feature type="region of interest" description="Head of neuraminidase" evidence="1">
    <location>
        <begin position="91"/>
        <end position="470"/>
    </location>
</feature>
<feature type="active site" description="Proton donor/acceptor" evidence="1">
    <location>
        <position position="151"/>
    </location>
</feature>
<feature type="active site" description="Nucleophile" evidence="1">
    <location>
        <position position="402"/>
    </location>
</feature>
<feature type="binding site" evidence="1">
    <location>
        <position position="118"/>
    </location>
    <ligand>
        <name>substrate</name>
    </ligand>
</feature>
<feature type="binding site" evidence="1">
    <location>
        <position position="152"/>
    </location>
    <ligand>
        <name>substrate</name>
    </ligand>
</feature>
<feature type="binding site" evidence="1">
    <location>
        <begin position="277"/>
        <end position="278"/>
    </location>
    <ligand>
        <name>substrate</name>
    </ligand>
</feature>
<feature type="binding site" evidence="1">
    <location>
        <position position="293"/>
    </location>
    <ligand>
        <name>substrate</name>
    </ligand>
</feature>
<feature type="binding site" evidence="1">
    <location>
        <position position="294"/>
    </location>
    <ligand>
        <name>Ca(2+)</name>
        <dbReference type="ChEBI" id="CHEBI:29108"/>
    </ligand>
</feature>
<feature type="binding site" evidence="1">
    <location>
        <position position="298"/>
    </location>
    <ligand>
        <name>Ca(2+)</name>
        <dbReference type="ChEBI" id="CHEBI:29108"/>
    </ligand>
</feature>
<feature type="binding site" evidence="1">
    <location>
        <position position="324"/>
    </location>
    <ligand>
        <name>Ca(2+)</name>
        <dbReference type="ChEBI" id="CHEBI:29108"/>
    </ligand>
</feature>
<feature type="binding site" evidence="1">
    <location>
        <position position="368"/>
    </location>
    <ligand>
        <name>substrate</name>
    </ligand>
</feature>
<feature type="glycosylation site" description="N-linked (GlcNAc...) asparagine; by host" evidence="1">
    <location>
        <position position="44"/>
    </location>
</feature>
<feature type="glycosylation site" description="N-linked (GlcNAc...) asparagine; by host" evidence="1">
    <location>
        <position position="58"/>
    </location>
</feature>
<feature type="glycosylation site" description="N-linked (GlcNAc...) asparagine; by host" evidence="1">
    <location>
        <position position="63"/>
    </location>
</feature>
<feature type="glycosylation site" description="N-linked (GlcNAc...) asparagine; by host" evidence="1">
    <location>
        <position position="68"/>
    </location>
</feature>
<feature type="glycosylation site" description="N-linked (GlcNAc...) asparagine; by host" evidence="1">
    <location>
        <position position="88"/>
    </location>
</feature>
<feature type="glycosylation site" description="N-linked (GlcNAc...) asparagine; by host" evidence="1">
    <location>
        <position position="146"/>
    </location>
</feature>
<feature type="glycosylation site" description="N-linked (GlcNAc...) asparagine; by host" evidence="1">
    <location>
        <position position="235"/>
    </location>
</feature>
<feature type="glycosylation site" description="N-linked (GlcNAc...) asparagine; by host" evidence="1">
    <location>
        <position position="365"/>
    </location>
</feature>
<feature type="glycosylation site" description="N-linked (GlcNAc...) asparagine; by host" evidence="1">
    <location>
        <position position="455"/>
    </location>
</feature>
<feature type="disulfide bond" evidence="1">
    <location>
        <begin position="92"/>
        <end position="417"/>
    </location>
</feature>
<feature type="disulfide bond" evidence="1">
    <location>
        <begin position="124"/>
        <end position="129"/>
    </location>
</feature>
<feature type="disulfide bond" evidence="1">
    <location>
        <begin position="184"/>
        <end position="231"/>
    </location>
</feature>
<feature type="disulfide bond" evidence="1">
    <location>
        <begin position="233"/>
        <end position="238"/>
    </location>
</feature>
<feature type="disulfide bond" evidence="1">
    <location>
        <begin position="279"/>
        <end position="292"/>
    </location>
</feature>
<feature type="disulfide bond" evidence="1">
    <location>
        <begin position="281"/>
        <end position="290"/>
    </location>
</feature>
<feature type="disulfide bond" evidence="1">
    <location>
        <begin position="318"/>
        <end position="335"/>
    </location>
</feature>
<feature type="disulfide bond" evidence="1">
    <location>
        <begin position="421"/>
        <end position="447"/>
    </location>
</feature>
<accession>A4K146</accession>
<dbReference type="EC" id="3.2.1.18" evidence="1"/>
<dbReference type="EMBL" id="CY021055">
    <property type="protein sequence ID" value="ABO52283.1"/>
    <property type="molecule type" value="Viral_cRNA"/>
</dbReference>
<dbReference type="SMR" id="A4K146"/>
<dbReference type="CAZy" id="GH34">
    <property type="family name" value="Glycoside Hydrolase Family 34"/>
</dbReference>
<dbReference type="GlyCosmos" id="A4K146">
    <property type="glycosylation" value="9 sites, No reported glycans"/>
</dbReference>
<dbReference type="PRO" id="PR:A4K146"/>
<dbReference type="Proteomes" id="UP000008219">
    <property type="component" value="Genome"/>
</dbReference>
<dbReference type="GO" id="GO:0020002">
    <property type="term" value="C:host cell plasma membrane"/>
    <property type="evidence" value="ECO:0007669"/>
    <property type="project" value="UniProtKB-SubCell"/>
</dbReference>
<dbReference type="GO" id="GO:0016020">
    <property type="term" value="C:membrane"/>
    <property type="evidence" value="ECO:0007669"/>
    <property type="project" value="UniProtKB-UniRule"/>
</dbReference>
<dbReference type="GO" id="GO:0055036">
    <property type="term" value="C:virion membrane"/>
    <property type="evidence" value="ECO:0007669"/>
    <property type="project" value="UniProtKB-SubCell"/>
</dbReference>
<dbReference type="GO" id="GO:0004308">
    <property type="term" value="F:exo-alpha-sialidase activity"/>
    <property type="evidence" value="ECO:0007669"/>
    <property type="project" value="UniProtKB-UniRule"/>
</dbReference>
<dbReference type="GO" id="GO:0046872">
    <property type="term" value="F:metal ion binding"/>
    <property type="evidence" value="ECO:0007669"/>
    <property type="project" value="UniProtKB-UniRule"/>
</dbReference>
<dbReference type="GO" id="GO:0005975">
    <property type="term" value="P:carbohydrate metabolic process"/>
    <property type="evidence" value="ECO:0007669"/>
    <property type="project" value="InterPro"/>
</dbReference>
<dbReference type="GO" id="GO:0046761">
    <property type="term" value="P:viral budding from plasma membrane"/>
    <property type="evidence" value="ECO:0007669"/>
    <property type="project" value="UniProtKB-UniRule"/>
</dbReference>
<dbReference type="CDD" id="cd15483">
    <property type="entry name" value="Influenza_NA"/>
    <property type="match status" value="1"/>
</dbReference>
<dbReference type="FunFam" id="2.120.10.10:FF:000001">
    <property type="entry name" value="Neuraminidase"/>
    <property type="match status" value="1"/>
</dbReference>
<dbReference type="Gene3D" id="2.120.10.10">
    <property type="match status" value="1"/>
</dbReference>
<dbReference type="HAMAP" id="MF_04071">
    <property type="entry name" value="INFV_NRAM"/>
    <property type="match status" value="1"/>
</dbReference>
<dbReference type="InterPro" id="IPR001860">
    <property type="entry name" value="Glyco_hydro_34"/>
</dbReference>
<dbReference type="InterPro" id="IPR033654">
    <property type="entry name" value="Sialidase_Influenza_A/B"/>
</dbReference>
<dbReference type="InterPro" id="IPR036278">
    <property type="entry name" value="Sialidase_sf"/>
</dbReference>
<dbReference type="Pfam" id="PF00064">
    <property type="entry name" value="Neur"/>
    <property type="match status" value="1"/>
</dbReference>
<dbReference type="SUPFAM" id="SSF50939">
    <property type="entry name" value="Sialidases"/>
    <property type="match status" value="1"/>
</dbReference>
<organismHost>
    <name type="scientific">Aves</name>
    <dbReference type="NCBI Taxonomy" id="8782"/>
</organismHost>
<organismHost>
    <name type="scientific">Homo sapiens</name>
    <name type="common">Human</name>
    <dbReference type="NCBI Taxonomy" id="9606"/>
</organismHost>
<organismHost>
    <name type="scientific">Sus scrofa</name>
    <name type="common">Pig</name>
    <dbReference type="NCBI Taxonomy" id="9823"/>
</organismHost>
<gene>
    <name evidence="1" type="primary">NA</name>
</gene>
<sequence length="470" mass="52006">MNPNQKIITIGSICMTIGTISLILQIGNIISIWISHSIQTGSQNHTGICNQRIITYENNTWVNQTYVNISNTNVVAGKDTTSMILAGNSSLCPIRGWAIYSKDNSIRIGSKGDVFVIREPFISCSHLECRTFFLTQGALLNDKHSNGTVKDRSPYRALMSCPIGEAPSPYNSRFESVAWSASACHDGMGWLTIGISGPDDGAVAVLKYNGIITEIIKSWRKQILRTQESECVCVNGSCFTIMTDGPSDGPASYRIFKIEKGKITKSIELDAPNSHYEECSCYPDTGKVMCVCRDNWHGSNRPWVSFNQNLDYQIGYICSGVFGDNPRPKDGKGSCDPVNVDGADGVKGFSYRYGDGVWIGRTKSNSSRKGFEMIWDPNGWTDTDDNFLVKQDVVAMTDWSGYSGSFVQHPELTGLDCMRPCFWVELIRGRPREKTTIWTSGSSISFCGVNSDTVNWSWPDGAELPFTIDM</sequence>
<comment type="function">
    <text evidence="1">Catalyzes the removal of terminal sialic acid residues from viral and cellular glycoconjugates. Cleaves off the terminal sialic acids on the glycosylated HA during virus budding to facilitate virus release. Additionally helps virus spread through the circulation by further removing sialic acids from the cell surface. These cleavages prevent self-aggregation and ensure the efficient spread of the progeny virus from cell to cell. Otherwise, infection would be limited to one round of replication. Described as a receptor-destroying enzyme because it cleaves a terminal sialic acid from the cellular receptors. May facilitate viral invasion of the upper airways by cleaving the sialic acid moieties on the mucin of the airway epithelial cells. Likely to plays a role in the budding process through its association with lipid rafts during intracellular transport. May additionally display a raft-association independent effect on budding. Plays a role in the determination of host range restriction on replication and virulence. Sialidase activity in late endosome/lysosome traffic seems to enhance virus replication.</text>
</comment>
<comment type="catalytic activity">
    <reaction evidence="1">
        <text>Hydrolysis of alpha-(2-&gt;3)-, alpha-(2-&gt;6)-, alpha-(2-&gt;8)- glycosidic linkages of terminal sialic acid residues in oligosaccharides, glycoproteins, glycolipids, colominic acid and synthetic substrates.</text>
        <dbReference type="EC" id="3.2.1.18"/>
    </reaction>
</comment>
<comment type="cofactor">
    <cofactor evidence="1">
        <name>Ca(2+)</name>
        <dbReference type="ChEBI" id="CHEBI:29108"/>
    </cofactor>
</comment>
<comment type="activity regulation">
    <text evidence="1">Inhibited by the neuraminidase inhibitors zanamivir (Relenza) and oseltamivir (Tamiflu). These drugs interfere with the release of progeny virus from infected cells and are effective against all influenza strains. Resistance to neuraminidase inhibitors is quite rare.</text>
</comment>
<comment type="subunit">
    <text evidence="1">Homotetramer.</text>
</comment>
<comment type="subcellular location">
    <subcellularLocation>
        <location evidence="1">Virion membrane</location>
    </subcellularLocation>
    <subcellularLocation>
        <location evidence="1">Host apical cell membrane</location>
        <topology evidence="1">Single-pass type II membrane protein</topology>
    </subcellularLocation>
    <text evidence="1">Preferentially accumulates at the apical plasma membrane in infected polarized epithelial cells, which is the virus assembly site. Uses lipid rafts for cell surface transport and apical sorting. In the virion, forms a mushroom-shaped spike on the surface of the membrane.</text>
</comment>
<comment type="domain">
    <text evidence="1">Intact N-terminus is essential for virion morphogenesis. Possesses two apical sorting signals, one in the ectodomain, which is likely to be a glycan, and the other in the transmembrane domain. The transmembrane domain also plays a role in lipid raft association.</text>
</comment>
<comment type="PTM">
    <text evidence="1">N-glycosylated.</text>
</comment>
<comment type="miscellaneous">
    <text>The influenza A genome consist of 8 RNA segments. Genetic variation of hemagglutinin and/or neuraminidase genes results in the emergence of new influenza strains. The mechanism of variation can be the result of point mutations or the result of genetic reassortment between segments of two different strains.</text>
</comment>
<comment type="similarity">
    <text evidence="1">Belongs to the glycosyl hydrolase 34 family.</text>
</comment>
<proteinExistence type="inferred from homology"/>
<name>NRAM_I54A2</name>